<sequence>MNPSTTQARVVVDELIRGGVRDVVLCPGSRNAPLAFALQDADHAGRIRLHVRIDERTAGYLAIGLAVAAGAPVCVAMTSGTAVANLGPAVVEANYARVPLIVLSANRPYELLGTGANQTMEQLGYFGTQVRAAISLGLAEDAPERLDSLNATWRSATCRVLVAATGSRTANAGPVQFDIPLREPLIPDPEPHGAITPQGRPGGKPWTYIPQVTFDQPLEIDLSADTVVIAGHGAGVHPNLTELPIVAEPTAPFGPYRPYPLHPLALPLLHPKQVIMLGRPTLHRPVSALLADPQVPVYALTTGPCWPDVSGNSQAAGTRAVTTGTPHPAWLQRCAEMNQHAISTVRSQLAAHPLITGLHVAAAVADALRPGDQLVLGASNPVRDMALVGLSTDGIQVRSNRGVAGIDGTVSTAIGAALAYERSPGYAGSTDRPARTVALIGDLAFVHDSSGLLIGPTEPTPQQLKIVVSNDNGGGIFELLEQGDPRLSAVSSRIFGTPHDVDVGALCRAYHVEGRQIEVDKLREALDEPGVGMRVLEVKADRSSLRQLHAAITATL</sequence>
<evidence type="ECO:0000255" key="1">
    <source>
        <dbReference type="HAMAP-Rule" id="MF_01659"/>
    </source>
</evidence>
<proteinExistence type="inferred from homology"/>
<gene>
    <name evidence="1" type="primary">menD</name>
    <name type="ordered locus">MLBr02270</name>
</gene>
<organism>
    <name type="scientific">Mycobacterium leprae (strain Br4923)</name>
    <dbReference type="NCBI Taxonomy" id="561304"/>
    <lineage>
        <taxon>Bacteria</taxon>
        <taxon>Bacillati</taxon>
        <taxon>Actinomycetota</taxon>
        <taxon>Actinomycetes</taxon>
        <taxon>Mycobacteriales</taxon>
        <taxon>Mycobacteriaceae</taxon>
        <taxon>Mycobacterium</taxon>
    </lineage>
</organism>
<comment type="function">
    <text evidence="1">Catalyzes the thiamine diphosphate-dependent decarboxylation of 2-oxoglutarate and the subsequent addition of the resulting succinic semialdehyde-thiamine pyrophosphate anion to isochorismate to yield 2-succinyl-5-enolpyruvyl-6-hydroxy-3-cyclohexene-1-carboxylate (SEPHCHC).</text>
</comment>
<comment type="catalytic activity">
    <reaction evidence="1">
        <text>isochorismate + 2-oxoglutarate + H(+) = 5-enolpyruvoyl-6-hydroxy-2-succinyl-cyclohex-3-ene-1-carboxylate + CO2</text>
        <dbReference type="Rhea" id="RHEA:25593"/>
        <dbReference type="ChEBI" id="CHEBI:15378"/>
        <dbReference type="ChEBI" id="CHEBI:16526"/>
        <dbReference type="ChEBI" id="CHEBI:16810"/>
        <dbReference type="ChEBI" id="CHEBI:29780"/>
        <dbReference type="ChEBI" id="CHEBI:58818"/>
        <dbReference type="EC" id="2.2.1.9"/>
    </reaction>
</comment>
<comment type="cofactor">
    <cofactor evidence="1">
        <name>Mg(2+)</name>
        <dbReference type="ChEBI" id="CHEBI:18420"/>
    </cofactor>
    <cofactor evidence="1">
        <name>Mn(2+)</name>
        <dbReference type="ChEBI" id="CHEBI:29035"/>
    </cofactor>
</comment>
<comment type="cofactor">
    <cofactor evidence="1">
        <name>thiamine diphosphate</name>
        <dbReference type="ChEBI" id="CHEBI:58937"/>
    </cofactor>
    <text evidence="1">Binds 1 thiamine pyrophosphate per subunit.</text>
</comment>
<comment type="pathway">
    <text evidence="1">Quinol/quinone metabolism; 1,4-dihydroxy-2-naphthoate biosynthesis; 1,4-dihydroxy-2-naphthoate from chorismate: step 2/7.</text>
</comment>
<comment type="pathway">
    <text evidence="1">Quinol/quinone metabolism; menaquinone biosynthesis.</text>
</comment>
<comment type="subunit">
    <text evidence="1">Homodimer.</text>
</comment>
<comment type="similarity">
    <text evidence="1">Belongs to the TPP enzyme family. MenD subfamily.</text>
</comment>
<name>MEND_MYCLB</name>
<protein>
    <recommendedName>
        <fullName evidence="1">2-succinyl-5-enolpyruvyl-6-hydroxy-3-cyclohexene-1-carboxylate synthase</fullName>
        <shortName evidence="1">SEPHCHC synthase</shortName>
        <ecNumber evidence="1">2.2.1.9</ecNumber>
    </recommendedName>
    <alternativeName>
        <fullName evidence="1">Menaquinone biosynthesis protein MenD</fullName>
    </alternativeName>
</protein>
<feature type="chain" id="PRO_1000187082" description="2-succinyl-5-enolpyruvyl-6-hydroxy-3-cyclohexene-1-carboxylate synthase">
    <location>
        <begin position="1"/>
        <end position="556"/>
    </location>
</feature>
<reference key="1">
    <citation type="journal article" date="2009" name="Nat. Genet.">
        <title>Comparative genomic and phylogeographic analysis of Mycobacterium leprae.</title>
        <authorList>
            <person name="Monot M."/>
            <person name="Honore N."/>
            <person name="Garnier T."/>
            <person name="Zidane N."/>
            <person name="Sherafi D."/>
            <person name="Paniz-Mondolfi A."/>
            <person name="Matsuoka M."/>
            <person name="Taylor G.M."/>
            <person name="Donoghue H.D."/>
            <person name="Bouwman A."/>
            <person name="Mays S."/>
            <person name="Watson C."/>
            <person name="Lockwood D."/>
            <person name="Khamispour A."/>
            <person name="Dowlati Y."/>
            <person name="Jianping S."/>
            <person name="Rea T.H."/>
            <person name="Vera-Cabrera L."/>
            <person name="Stefani M.M."/>
            <person name="Banu S."/>
            <person name="Macdonald M."/>
            <person name="Sapkota B.R."/>
            <person name="Spencer J.S."/>
            <person name="Thomas J."/>
            <person name="Harshman K."/>
            <person name="Singh P."/>
            <person name="Busso P."/>
            <person name="Gattiker A."/>
            <person name="Rougemont J."/>
            <person name="Brennan P.J."/>
            <person name="Cole S.T."/>
        </authorList>
    </citation>
    <scope>NUCLEOTIDE SEQUENCE [LARGE SCALE GENOMIC DNA]</scope>
    <source>
        <strain>Br4923</strain>
    </source>
</reference>
<dbReference type="EC" id="2.2.1.9" evidence="1"/>
<dbReference type="EMBL" id="FM211192">
    <property type="protein sequence ID" value="CAR72368.1"/>
    <property type="molecule type" value="Genomic_DNA"/>
</dbReference>
<dbReference type="SMR" id="B8ZSY2"/>
<dbReference type="KEGG" id="mlb:MLBr02270"/>
<dbReference type="HOGENOM" id="CLU_006051_4_1_11"/>
<dbReference type="UniPathway" id="UPA00079"/>
<dbReference type="UniPathway" id="UPA01057">
    <property type="reaction ID" value="UER00164"/>
</dbReference>
<dbReference type="Proteomes" id="UP000006900">
    <property type="component" value="Chromosome"/>
</dbReference>
<dbReference type="GO" id="GO:0070204">
    <property type="term" value="F:2-succinyl-5-enolpyruvyl-6-hydroxy-3-cyclohexene-1-carboxylic-acid synthase activity"/>
    <property type="evidence" value="ECO:0007669"/>
    <property type="project" value="UniProtKB-UniRule"/>
</dbReference>
<dbReference type="GO" id="GO:0000287">
    <property type="term" value="F:magnesium ion binding"/>
    <property type="evidence" value="ECO:0007669"/>
    <property type="project" value="UniProtKB-UniRule"/>
</dbReference>
<dbReference type="GO" id="GO:0030145">
    <property type="term" value="F:manganese ion binding"/>
    <property type="evidence" value="ECO:0007669"/>
    <property type="project" value="UniProtKB-UniRule"/>
</dbReference>
<dbReference type="GO" id="GO:0030976">
    <property type="term" value="F:thiamine pyrophosphate binding"/>
    <property type="evidence" value="ECO:0007669"/>
    <property type="project" value="UniProtKB-UniRule"/>
</dbReference>
<dbReference type="GO" id="GO:0009234">
    <property type="term" value="P:menaquinone biosynthetic process"/>
    <property type="evidence" value="ECO:0007669"/>
    <property type="project" value="UniProtKB-UniRule"/>
</dbReference>
<dbReference type="CDD" id="cd07037">
    <property type="entry name" value="TPP_PYR_MenD"/>
    <property type="match status" value="1"/>
</dbReference>
<dbReference type="CDD" id="cd02009">
    <property type="entry name" value="TPP_SHCHC_synthase"/>
    <property type="match status" value="1"/>
</dbReference>
<dbReference type="FunFam" id="3.40.50.970:FF:000066">
    <property type="entry name" value="2-succinyl-5-enolpyruvyl-6-hydroxy-3-cyclohexene-1-carboxylate synthase"/>
    <property type="match status" value="1"/>
</dbReference>
<dbReference type="Gene3D" id="3.40.50.970">
    <property type="match status" value="2"/>
</dbReference>
<dbReference type="Gene3D" id="3.40.50.1220">
    <property type="entry name" value="TPP-binding domain"/>
    <property type="match status" value="1"/>
</dbReference>
<dbReference type="HAMAP" id="MF_01659">
    <property type="entry name" value="MenD"/>
    <property type="match status" value="1"/>
</dbReference>
<dbReference type="InterPro" id="IPR004433">
    <property type="entry name" value="MenaQ_synth_MenD"/>
</dbReference>
<dbReference type="InterPro" id="IPR029061">
    <property type="entry name" value="THDP-binding"/>
</dbReference>
<dbReference type="InterPro" id="IPR012001">
    <property type="entry name" value="Thiamin_PyroP_enz_TPP-bd_dom"/>
</dbReference>
<dbReference type="NCBIfam" id="TIGR00173">
    <property type="entry name" value="menD"/>
    <property type="match status" value="1"/>
</dbReference>
<dbReference type="PANTHER" id="PTHR42916">
    <property type="entry name" value="2-SUCCINYL-5-ENOLPYRUVYL-6-HYDROXY-3-CYCLOHEXENE-1-CARBOXYLATE SYNTHASE"/>
    <property type="match status" value="1"/>
</dbReference>
<dbReference type="PANTHER" id="PTHR42916:SF1">
    <property type="entry name" value="PROTEIN PHYLLO, CHLOROPLASTIC"/>
    <property type="match status" value="1"/>
</dbReference>
<dbReference type="Pfam" id="PF02776">
    <property type="entry name" value="TPP_enzyme_N"/>
    <property type="match status" value="1"/>
</dbReference>
<dbReference type="PIRSF" id="PIRSF004983">
    <property type="entry name" value="MenD"/>
    <property type="match status" value="1"/>
</dbReference>
<dbReference type="SUPFAM" id="SSF52518">
    <property type="entry name" value="Thiamin diphosphate-binding fold (THDP-binding)"/>
    <property type="match status" value="2"/>
</dbReference>
<keyword id="KW-0460">Magnesium</keyword>
<keyword id="KW-0464">Manganese</keyword>
<keyword id="KW-0474">Menaquinone biosynthesis</keyword>
<keyword id="KW-0479">Metal-binding</keyword>
<keyword id="KW-0786">Thiamine pyrophosphate</keyword>
<keyword id="KW-0808">Transferase</keyword>
<accession>B8ZSY2</accession>